<reference key="1">
    <citation type="submission" date="2008-02" db="EMBL/GenBank/DDBJ databases">
        <title>Complete sequence of Haemophilus somnus 2336.</title>
        <authorList>
            <consortium name="US DOE Joint Genome Institute"/>
            <person name="Siddaramappa S."/>
            <person name="Duncan A.J."/>
            <person name="Challacombe J.F."/>
            <person name="Rainey D."/>
            <person name="Gillaspy A.F."/>
            <person name="Carson M."/>
            <person name="Gipson J."/>
            <person name="Gipson M."/>
            <person name="Bruce D."/>
            <person name="Detter J.C."/>
            <person name="Han C.S."/>
            <person name="Land M."/>
            <person name="Tapia R."/>
            <person name="Thompson L.S."/>
            <person name="Orvis J."/>
            <person name="Zaitshik J."/>
            <person name="Barnes G."/>
            <person name="Brettin T.S."/>
            <person name="Dyer D.W."/>
            <person name="Inzana T.J."/>
        </authorList>
    </citation>
    <scope>NUCLEOTIDE SEQUENCE [LARGE SCALE GENOMIC DNA]</scope>
    <source>
        <strain>2336</strain>
    </source>
</reference>
<gene>
    <name evidence="1" type="primary">rnpA</name>
    <name type="ordered locus">HSM_2020</name>
</gene>
<protein>
    <recommendedName>
        <fullName evidence="1">Ribonuclease P protein component</fullName>
        <shortName evidence="1">RNase P protein</shortName>
        <shortName evidence="1">RNaseP protein</shortName>
        <ecNumber evidence="1">3.1.26.5</ecNumber>
    </recommendedName>
    <alternativeName>
        <fullName evidence="1">Protein C5</fullName>
    </alternativeName>
</protein>
<organism>
    <name type="scientific">Histophilus somni (strain 2336)</name>
    <name type="common">Haemophilus somnus</name>
    <dbReference type="NCBI Taxonomy" id="228400"/>
    <lineage>
        <taxon>Bacteria</taxon>
        <taxon>Pseudomonadati</taxon>
        <taxon>Pseudomonadota</taxon>
        <taxon>Gammaproteobacteria</taxon>
        <taxon>Pasteurellales</taxon>
        <taxon>Pasteurellaceae</taxon>
        <taxon>Histophilus</taxon>
    </lineage>
</organism>
<keyword id="KW-0255">Endonuclease</keyword>
<keyword id="KW-0378">Hydrolase</keyword>
<keyword id="KW-0540">Nuclease</keyword>
<keyword id="KW-0694">RNA-binding</keyword>
<keyword id="KW-0819">tRNA processing</keyword>
<comment type="function">
    <text evidence="1">RNaseP catalyzes the removal of the 5'-leader sequence from pre-tRNA to produce the mature 5'-terminus. It can also cleave other RNA substrates such as 4.5S RNA. The protein component plays an auxiliary but essential role in vivo by binding to the 5'-leader sequence and broadening the substrate specificity of the ribozyme.</text>
</comment>
<comment type="catalytic activity">
    <reaction evidence="1">
        <text>Endonucleolytic cleavage of RNA, removing 5'-extranucleotides from tRNA precursor.</text>
        <dbReference type="EC" id="3.1.26.5"/>
    </reaction>
</comment>
<comment type="subunit">
    <text evidence="1">Consists of a catalytic RNA component (M1 or rnpB) and a protein subunit.</text>
</comment>
<comment type="similarity">
    <text evidence="1">Belongs to the RnpA family.</text>
</comment>
<accession>B0URU5</accession>
<sequence>MVKLGFSRELRLLTPSHFKCVFQKPLRVSTPEITILARKNNLEHSRLGLTVAKKHLKRAHDRNRVKRISRESFRLLQGQLANYDFVIITKKGIGNLDNQQLFQTLDKLWKRHIRLVQKS</sequence>
<name>RNPA_HISS2</name>
<proteinExistence type="inferred from homology"/>
<dbReference type="EC" id="3.1.26.5" evidence="1"/>
<dbReference type="EMBL" id="CP000947">
    <property type="protein sequence ID" value="ACA31823.1"/>
    <property type="molecule type" value="Genomic_DNA"/>
</dbReference>
<dbReference type="RefSeq" id="WP_011608287.1">
    <property type="nucleotide sequence ID" value="NC_010519.1"/>
</dbReference>
<dbReference type="SMR" id="B0URU5"/>
<dbReference type="STRING" id="228400.HSM_2020"/>
<dbReference type="GeneID" id="31488331"/>
<dbReference type="KEGG" id="hsm:HSM_2020"/>
<dbReference type="HOGENOM" id="CLU_117179_11_0_6"/>
<dbReference type="GO" id="GO:0030677">
    <property type="term" value="C:ribonuclease P complex"/>
    <property type="evidence" value="ECO:0007669"/>
    <property type="project" value="TreeGrafter"/>
</dbReference>
<dbReference type="GO" id="GO:0042781">
    <property type="term" value="F:3'-tRNA processing endoribonuclease activity"/>
    <property type="evidence" value="ECO:0007669"/>
    <property type="project" value="TreeGrafter"/>
</dbReference>
<dbReference type="GO" id="GO:0004526">
    <property type="term" value="F:ribonuclease P activity"/>
    <property type="evidence" value="ECO:0007669"/>
    <property type="project" value="UniProtKB-UniRule"/>
</dbReference>
<dbReference type="GO" id="GO:0000049">
    <property type="term" value="F:tRNA binding"/>
    <property type="evidence" value="ECO:0007669"/>
    <property type="project" value="UniProtKB-UniRule"/>
</dbReference>
<dbReference type="GO" id="GO:0001682">
    <property type="term" value="P:tRNA 5'-leader removal"/>
    <property type="evidence" value="ECO:0007669"/>
    <property type="project" value="UniProtKB-UniRule"/>
</dbReference>
<dbReference type="Gene3D" id="3.30.230.10">
    <property type="match status" value="1"/>
</dbReference>
<dbReference type="HAMAP" id="MF_00227">
    <property type="entry name" value="RNase_P"/>
    <property type="match status" value="1"/>
</dbReference>
<dbReference type="InterPro" id="IPR020568">
    <property type="entry name" value="Ribosomal_Su5_D2-typ_SF"/>
</dbReference>
<dbReference type="InterPro" id="IPR014721">
    <property type="entry name" value="Ribsml_uS5_D2-typ_fold_subgr"/>
</dbReference>
<dbReference type="InterPro" id="IPR000100">
    <property type="entry name" value="RNase_P"/>
</dbReference>
<dbReference type="NCBIfam" id="TIGR00188">
    <property type="entry name" value="rnpA"/>
    <property type="match status" value="1"/>
</dbReference>
<dbReference type="PANTHER" id="PTHR33992">
    <property type="entry name" value="RIBONUCLEASE P PROTEIN COMPONENT"/>
    <property type="match status" value="1"/>
</dbReference>
<dbReference type="PANTHER" id="PTHR33992:SF1">
    <property type="entry name" value="RIBONUCLEASE P PROTEIN COMPONENT"/>
    <property type="match status" value="1"/>
</dbReference>
<dbReference type="Pfam" id="PF00825">
    <property type="entry name" value="Ribonuclease_P"/>
    <property type="match status" value="1"/>
</dbReference>
<dbReference type="SUPFAM" id="SSF54211">
    <property type="entry name" value="Ribosomal protein S5 domain 2-like"/>
    <property type="match status" value="1"/>
</dbReference>
<evidence type="ECO:0000255" key="1">
    <source>
        <dbReference type="HAMAP-Rule" id="MF_00227"/>
    </source>
</evidence>
<feature type="chain" id="PRO_1000078197" description="Ribonuclease P protein component">
    <location>
        <begin position="1"/>
        <end position="119"/>
    </location>
</feature>